<protein>
    <recommendedName>
        <fullName>Uncharacterized peptidase MW1651</fullName>
        <ecNumber>3.4.-.-</ecNumber>
    </recommendedName>
</protein>
<keyword id="KW-0378">Hydrolase</keyword>
<keyword id="KW-0464">Manganese</keyword>
<keyword id="KW-0479">Metal-binding</keyword>
<comment type="cofactor">
    <cofactor evidence="2">
        <name>Mn(2+)</name>
        <dbReference type="ChEBI" id="CHEBI:29035"/>
    </cofactor>
    <text evidence="2">Binds 2 manganese ions per subunit.</text>
</comment>
<comment type="similarity">
    <text evidence="2">Belongs to the peptidase M24B family.</text>
</comment>
<gene>
    <name type="ordered locus">MW1651</name>
</gene>
<name>Y1651_STAAW</name>
<evidence type="ECO:0000255" key="1"/>
<evidence type="ECO:0000305" key="2"/>
<proteinExistence type="inferred from homology"/>
<dbReference type="EC" id="3.4.-.-"/>
<dbReference type="EMBL" id="BA000033">
    <property type="protein sequence ID" value="BAB95516.1"/>
    <property type="molecule type" value="Genomic_DNA"/>
</dbReference>
<dbReference type="RefSeq" id="WP_000161667.1">
    <property type="nucleotide sequence ID" value="NC_003923.1"/>
</dbReference>
<dbReference type="SMR" id="Q8NW55"/>
<dbReference type="KEGG" id="sam:MW1651"/>
<dbReference type="HOGENOM" id="CLU_017266_4_2_9"/>
<dbReference type="GO" id="GO:0016787">
    <property type="term" value="F:hydrolase activity"/>
    <property type="evidence" value="ECO:0007669"/>
    <property type="project" value="UniProtKB-KW"/>
</dbReference>
<dbReference type="GO" id="GO:0046872">
    <property type="term" value="F:metal ion binding"/>
    <property type="evidence" value="ECO:0007669"/>
    <property type="project" value="UniProtKB-KW"/>
</dbReference>
<dbReference type="CDD" id="cd01092">
    <property type="entry name" value="APP-like"/>
    <property type="match status" value="1"/>
</dbReference>
<dbReference type="FunFam" id="3.90.230.10:FF:000014">
    <property type="entry name" value="Aminopeptidase P family protein"/>
    <property type="match status" value="1"/>
</dbReference>
<dbReference type="Gene3D" id="3.90.230.10">
    <property type="entry name" value="Creatinase/methionine aminopeptidase superfamily"/>
    <property type="match status" value="1"/>
</dbReference>
<dbReference type="Gene3D" id="3.40.350.10">
    <property type="entry name" value="Creatinase/prolidase N-terminal domain"/>
    <property type="match status" value="1"/>
</dbReference>
<dbReference type="InterPro" id="IPR029149">
    <property type="entry name" value="Creatin/AminoP/Spt16_N"/>
</dbReference>
<dbReference type="InterPro" id="IPR036005">
    <property type="entry name" value="Creatinase/aminopeptidase-like"/>
</dbReference>
<dbReference type="InterPro" id="IPR000587">
    <property type="entry name" value="Creatinase_N"/>
</dbReference>
<dbReference type="InterPro" id="IPR000994">
    <property type="entry name" value="Pept_M24"/>
</dbReference>
<dbReference type="InterPro" id="IPR050659">
    <property type="entry name" value="Peptidase_M24B"/>
</dbReference>
<dbReference type="InterPro" id="IPR001131">
    <property type="entry name" value="Peptidase_M24B_aminopep-P_CS"/>
</dbReference>
<dbReference type="PANTHER" id="PTHR46112">
    <property type="entry name" value="AMINOPEPTIDASE"/>
    <property type="match status" value="1"/>
</dbReference>
<dbReference type="PANTHER" id="PTHR46112:SF10">
    <property type="entry name" value="DIPEPTIDASE YKVY-RELATED"/>
    <property type="match status" value="1"/>
</dbReference>
<dbReference type="Pfam" id="PF01321">
    <property type="entry name" value="Creatinase_N"/>
    <property type="match status" value="1"/>
</dbReference>
<dbReference type="Pfam" id="PF00557">
    <property type="entry name" value="Peptidase_M24"/>
    <property type="match status" value="1"/>
</dbReference>
<dbReference type="SUPFAM" id="SSF55920">
    <property type="entry name" value="Creatinase/aminopeptidase"/>
    <property type="match status" value="1"/>
</dbReference>
<dbReference type="SUPFAM" id="SSF53092">
    <property type="entry name" value="Creatinase/prolidase N-terminal domain"/>
    <property type="match status" value="1"/>
</dbReference>
<dbReference type="PROSITE" id="PS00491">
    <property type="entry name" value="PROLINE_PEPTIDASE"/>
    <property type="match status" value="1"/>
</dbReference>
<reference key="1">
    <citation type="journal article" date="2002" name="Lancet">
        <title>Genome and virulence determinants of high virulence community-acquired MRSA.</title>
        <authorList>
            <person name="Baba T."/>
            <person name="Takeuchi F."/>
            <person name="Kuroda M."/>
            <person name="Yuzawa H."/>
            <person name="Aoki K."/>
            <person name="Oguchi A."/>
            <person name="Nagai Y."/>
            <person name="Iwama N."/>
            <person name="Asano K."/>
            <person name="Naimi T."/>
            <person name="Kuroda H."/>
            <person name="Cui L."/>
            <person name="Yamamoto K."/>
            <person name="Hiramatsu K."/>
        </authorList>
    </citation>
    <scope>NUCLEOTIDE SEQUENCE [LARGE SCALE GENOMIC DNA]</scope>
    <source>
        <strain>MW2</strain>
    </source>
</reference>
<feature type="chain" id="PRO_0000299427" description="Uncharacterized peptidase MW1651">
    <location>
        <begin position="1"/>
        <end position="351"/>
    </location>
</feature>
<feature type="binding site" evidence="1">
    <location>
        <position position="215"/>
    </location>
    <ligand>
        <name>Mn(2+)</name>
        <dbReference type="ChEBI" id="CHEBI:29035"/>
        <label>2</label>
    </ligand>
</feature>
<feature type="binding site" evidence="1">
    <location>
        <position position="226"/>
    </location>
    <ligand>
        <name>Mn(2+)</name>
        <dbReference type="ChEBI" id="CHEBI:29035"/>
        <label>1</label>
    </ligand>
</feature>
<feature type="binding site" evidence="1">
    <location>
        <position position="226"/>
    </location>
    <ligand>
        <name>Mn(2+)</name>
        <dbReference type="ChEBI" id="CHEBI:29035"/>
        <label>2</label>
    </ligand>
</feature>
<feature type="binding site" evidence="1">
    <location>
        <position position="290"/>
    </location>
    <ligand>
        <name>Mn(2+)</name>
        <dbReference type="ChEBI" id="CHEBI:29035"/>
        <label>1</label>
    </ligand>
</feature>
<feature type="binding site" evidence="1">
    <location>
        <position position="319"/>
    </location>
    <ligand>
        <name>Mn(2+)</name>
        <dbReference type="ChEBI" id="CHEBI:29035"/>
        <label>1</label>
    </ligand>
</feature>
<feature type="binding site" evidence="1">
    <location>
        <position position="333"/>
    </location>
    <ligand>
        <name>Mn(2+)</name>
        <dbReference type="ChEBI" id="CHEBI:29035"/>
        <label>1</label>
    </ligand>
</feature>
<feature type="binding site" evidence="1">
    <location>
        <position position="333"/>
    </location>
    <ligand>
        <name>Mn(2+)</name>
        <dbReference type="ChEBI" id="CHEBI:29035"/>
        <label>2</label>
    </ligand>
</feature>
<accession>Q8NW55</accession>
<sequence length="351" mass="39637">MTKISKIIDELNNQQADAAWITTPLNVYYFTGYRSEPHERLFALLIKKDGKQVLFCPKMEVEEVKASPFTGEIVGYLDTENPFSLYPQTINKLLIESEHLTVARQKQLISGFNVNSFGDVDLTIKQLRNIKSEDEISKIRKAAELADKCIEIGVSYLKEGVTEREVVNHIEQTIKQYGVNEMSFDTMVLFGDHAASPHGTPGDRRLKSNEYVLFDLGVIYEHYCSDMTRTIKFGEPSKEAQEIYNIVLEAETSAIQAIKPGIPLKDIDHIARNIISEKGYGEYFPHRLGHGLGLQEHEYQDVSSTNSNLLEAGMVITIEPGIYVPSVAGVRIEDDILVTNEGYEVLTHYEK</sequence>
<organism>
    <name type="scientific">Staphylococcus aureus (strain MW2)</name>
    <dbReference type="NCBI Taxonomy" id="196620"/>
    <lineage>
        <taxon>Bacteria</taxon>
        <taxon>Bacillati</taxon>
        <taxon>Bacillota</taxon>
        <taxon>Bacilli</taxon>
        <taxon>Bacillales</taxon>
        <taxon>Staphylococcaceae</taxon>
        <taxon>Staphylococcus</taxon>
    </lineage>
</organism>